<protein>
    <recommendedName>
        <fullName>RNA-binding protein 4B</fullName>
    </recommendedName>
    <alternativeName>
        <fullName>RNA-binding motif protein 30</fullName>
    </alternativeName>
    <alternativeName>
        <fullName>RNA-binding motif protein 4B</fullName>
    </alternativeName>
    <alternativeName>
        <fullName>RNA-binding protein 30</fullName>
    </alternativeName>
</protein>
<proteinExistence type="evidence at protein level"/>
<dbReference type="EMBL" id="AK095158">
    <property type="protein sequence ID" value="BAG52995.1"/>
    <property type="molecule type" value="mRNA"/>
</dbReference>
<dbReference type="EMBL" id="CH471076">
    <property type="protein sequence ID" value="EAW74558.1"/>
    <property type="molecule type" value="Genomic_DNA"/>
</dbReference>
<dbReference type="EMBL" id="BC003503">
    <property type="protein sequence ID" value="AAH03503.1"/>
    <property type="molecule type" value="mRNA"/>
</dbReference>
<dbReference type="EMBL" id="BC004951">
    <property type="protein sequence ID" value="AAH04951.1"/>
    <property type="molecule type" value="mRNA"/>
</dbReference>
<dbReference type="CCDS" id="CCDS8149.1"/>
<dbReference type="RefSeq" id="NP_001273064.1">
    <property type="nucleotide sequence ID" value="NM_001286135.1"/>
</dbReference>
<dbReference type="RefSeq" id="NP_113680.1">
    <property type="nucleotide sequence ID" value="NM_031492.4"/>
</dbReference>
<dbReference type="RefSeq" id="XP_011543599.1">
    <property type="nucleotide sequence ID" value="XM_011545297.4"/>
</dbReference>
<dbReference type="RefSeq" id="XP_016873891.1">
    <property type="nucleotide sequence ID" value="XM_017018402.3"/>
</dbReference>
<dbReference type="RefSeq" id="XP_054226119.1">
    <property type="nucleotide sequence ID" value="XM_054370144.1"/>
</dbReference>
<dbReference type="RefSeq" id="XP_054226120.1">
    <property type="nucleotide sequence ID" value="XM_054370145.1"/>
</dbReference>
<dbReference type="PDB" id="2DGT">
    <property type="method" value="NMR"/>
    <property type="chains" value="A=75-153"/>
</dbReference>
<dbReference type="PDBsum" id="2DGT"/>
<dbReference type="SMR" id="Q9BQ04"/>
<dbReference type="BioGRID" id="123760">
    <property type="interactions" value="276"/>
</dbReference>
<dbReference type="FunCoup" id="Q9BQ04">
    <property type="interactions" value="2789"/>
</dbReference>
<dbReference type="IntAct" id="Q9BQ04">
    <property type="interactions" value="209"/>
</dbReference>
<dbReference type="MINT" id="Q9BQ04"/>
<dbReference type="STRING" id="9606.ENSP00000433071"/>
<dbReference type="GlyGen" id="Q9BQ04">
    <property type="glycosylation" value="1 site, 1 O-linked glycan (1 site)"/>
</dbReference>
<dbReference type="iPTMnet" id="Q9BQ04"/>
<dbReference type="PhosphoSitePlus" id="Q9BQ04"/>
<dbReference type="SwissPalm" id="Q9BQ04"/>
<dbReference type="BioMuta" id="RBM4B"/>
<dbReference type="DMDM" id="62511129"/>
<dbReference type="jPOST" id="Q9BQ04"/>
<dbReference type="MassIVE" id="Q9BQ04"/>
<dbReference type="PaxDb" id="9606-ENSP00000433071"/>
<dbReference type="PeptideAtlas" id="Q9BQ04"/>
<dbReference type="ProteomicsDB" id="78606"/>
<dbReference type="Pumba" id="Q9BQ04"/>
<dbReference type="Antibodypedia" id="16362">
    <property type="antibodies" value="69 antibodies from 21 providers"/>
</dbReference>
<dbReference type="DNASU" id="83759"/>
<dbReference type="Ensembl" id="ENST00000310046.9">
    <property type="protein sequence ID" value="ENSP00000310471.4"/>
    <property type="gene ID" value="ENSG00000173914.12"/>
</dbReference>
<dbReference type="Ensembl" id="ENST00000525754.5">
    <property type="protein sequence ID" value="ENSP00000433071.1"/>
    <property type="gene ID" value="ENSG00000173914.12"/>
</dbReference>
<dbReference type="GeneID" id="83759"/>
<dbReference type="KEGG" id="hsa:83759"/>
<dbReference type="MANE-Select" id="ENST00000310046.9">
    <property type="protein sequence ID" value="ENSP00000310471.4"/>
    <property type="RefSeq nucleotide sequence ID" value="NM_031492.4"/>
    <property type="RefSeq protein sequence ID" value="NP_113680.1"/>
</dbReference>
<dbReference type="UCSC" id="uc001oja.5">
    <property type="organism name" value="human"/>
</dbReference>
<dbReference type="AGR" id="HGNC:28842"/>
<dbReference type="CTD" id="83759"/>
<dbReference type="GeneCards" id="RBM4B"/>
<dbReference type="HGNC" id="HGNC:28842">
    <property type="gene designation" value="RBM4B"/>
</dbReference>
<dbReference type="HPA" id="ENSG00000173914">
    <property type="expression patterns" value="Low tissue specificity"/>
</dbReference>
<dbReference type="MIM" id="621045">
    <property type="type" value="gene"/>
</dbReference>
<dbReference type="neXtProt" id="NX_Q9BQ04"/>
<dbReference type="OpenTargets" id="ENSG00000173914"/>
<dbReference type="PharmGKB" id="PA134977404"/>
<dbReference type="VEuPathDB" id="HostDB:ENSG00000173914"/>
<dbReference type="eggNOG" id="KOG0109">
    <property type="taxonomic scope" value="Eukaryota"/>
</dbReference>
<dbReference type="GeneTree" id="ENSGT00940000154421"/>
<dbReference type="HOGENOM" id="CLU_045263_0_0_1"/>
<dbReference type="InParanoid" id="Q9BQ04"/>
<dbReference type="OMA" id="QMGTVKS"/>
<dbReference type="OrthoDB" id="79941at2759"/>
<dbReference type="PAN-GO" id="Q9BQ04">
    <property type="GO annotations" value="3 GO annotations based on evolutionary models"/>
</dbReference>
<dbReference type="PhylomeDB" id="Q9BQ04"/>
<dbReference type="TreeFam" id="TF320661"/>
<dbReference type="PathwayCommons" id="Q9BQ04"/>
<dbReference type="SignaLink" id="Q9BQ04"/>
<dbReference type="BioGRID-ORCS" id="83759">
    <property type="hits" value="20 hits in 1173 CRISPR screens"/>
</dbReference>
<dbReference type="CD-CODE" id="1A18FFC4">
    <property type="entry name" value="Paraspeckle"/>
</dbReference>
<dbReference type="CD-CODE" id="91857CE7">
    <property type="entry name" value="Nucleolus"/>
</dbReference>
<dbReference type="CD-CODE" id="DEE660B4">
    <property type="entry name" value="Stress granule"/>
</dbReference>
<dbReference type="ChiTaRS" id="RBM4B">
    <property type="organism name" value="human"/>
</dbReference>
<dbReference type="EvolutionaryTrace" id="Q9BQ04"/>
<dbReference type="GenomeRNAi" id="83759"/>
<dbReference type="Pharos" id="Q9BQ04">
    <property type="development level" value="Tdark"/>
</dbReference>
<dbReference type="PRO" id="PR:Q9BQ04"/>
<dbReference type="Proteomes" id="UP000005640">
    <property type="component" value="Chromosome 11"/>
</dbReference>
<dbReference type="RNAct" id="Q9BQ04">
    <property type="molecule type" value="protein"/>
</dbReference>
<dbReference type="Bgee" id="ENSG00000173914">
    <property type="expression patterns" value="Expressed in cortical plate and 160 other cell types or tissues"/>
</dbReference>
<dbReference type="ExpressionAtlas" id="Q9BQ04">
    <property type="expression patterns" value="baseline and differential"/>
</dbReference>
<dbReference type="GO" id="GO:0005829">
    <property type="term" value="C:cytosol"/>
    <property type="evidence" value="ECO:0000314"/>
    <property type="project" value="HPA"/>
</dbReference>
<dbReference type="GO" id="GO:0016607">
    <property type="term" value="C:nuclear speck"/>
    <property type="evidence" value="ECO:0000318"/>
    <property type="project" value="GO_Central"/>
</dbReference>
<dbReference type="GO" id="GO:0005730">
    <property type="term" value="C:nucleolus"/>
    <property type="evidence" value="ECO:0007669"/>
    <property type="project" value="UniProtKB-SubCell"/>
</dbReference>
<dbReference type="GO" id="GO:0005654">
    <property type="term" value="C:nucleoplasm"/>
    <property type="evidence" value="ECO:0000314"/>
    <property type="project" value="HPA"/>
</dbReference>
<dbReference type="GO" id="GO:0032991">
    <property type="term" value="C:protein-containing complex"/>
    <property type="evidence" value="ECO:0000314"/>
    <property type="project" value="UniProtKB"/>
</dbReference>
<dbReference type="GO" id="GO:0003723">
    <property type="term" value="F:RNA binding"/>
    <property type="evidence" value="ECO:0007005"/>
    <property type="project" value="UniProtKB"/>
</dbReference>
<dbReference type="GO" id="GO:0008270">
    <property type="term" value="F:zinc ion binding"/>
    <property type="evidence" value="ECO:0007669"/>
    <property type="project" value="UniProtKB-KW"/>
</dbReference>
<dbReference type="GO" id="GO:0032922">
    <property type="term" value="P:circadian regulation of gene expression"/>
    <property type="evidence" value="ECO:0000250"/>
    <property type="project" value="UniProtKB"/>
</dbReference>
<dbReference type="GO" id="GO:0007623">
    <property type="term" value="P:circadian rhythm"/>
    <property type="evidence" value="ECO:0000250"/>
    <property type="project" value="UniProtKB"/>
</dbReference>
<dbReference type="GO" id="GO:0043153">
    <property type="term" value="P:entrainment of circadian clock by photoperiod"/>
    <property type="evidence" value="ECO:0000250"/>
    <property type="project" value="UniProtKB"/>
</dbReference>
<dbReference type="GO" id="GO:0006397">
    <property type="term" value="P:mRNA processing"/>
    <property type="evidence" value="ECO:0007669"/>
    <property type="project" value="UniProtKB-KW"/>
</dbReference>
<dbReference type="GO" id="GO:0010628">
    <property type="term" value="P:positive regulation of gene expression"/>
    <property type="evidence" value="ECO:0007669"/>
    <property type="project" value="Ensembl"/>
</dbReference>
<dbReference type="GO" id="GO:0006417">
    <property type="term" value="P:regulation of translation"/>
    <property type="evidence" value="ECO:0000250"/>
    <property type="project" value="UniProtKB"/>
</dbReference>
<dbReference type="GO" id="GO:0008380">
    <property type="term" value="P:RNA splicing"/>
    <property type="evidence" value="ECO:0007669"/>
    <property type="project" value="UniProtKB-KW"/>
</dbReference>
<dbReference type="CDD" id="cd12606">
    <property type="entry name" value="RRM1_RBM4"/>
    <property type="match status" value="1"/>
</dbReference>
<dbReference type="CDD" id="cd12607">
    <property type="entry name" value="RRM2_RBM4"/>
    <property type="match status" value="1"/>
</dbReference>
<dbReference type="FunFam" id="3.30.70.330:FF:000058">
    <property type="entry name" value="RNA-binding motif protein 4"/>
    <property type="match status" value="1"/>
</dbReference>
<dbReference type="FunFam" id="3.30.70.330:FF:000085">
    <property type="entry name" value="RNA-binding protein 4 isoform X1"/>
    <property type="match status" value="1"/>
</dbReference>
<dbReference type="FunFam" id="4.10.60.10:FF:000015">
    <property type="entry name" value="RNA-binding protein 4B isoform X1"/>
    <property type="match status" value="1"/>
</dbReference>
<dbReference type="Gene3D" id="3.30.70.330">
    <property type="match status" value="2"/>
</dbReference>
<dbReference type="Gene3D" id="4.10.60.10">
    <property type="entry name" value="Zinc finger, CCHC-type"/>
    <property type="match status" value="1"/>
</dbReference>
<dbReference type="InterPro" id="IPR050502">
    <property type="entry name" value="Euk_RNA-bind_prot"/>
</dbReference>
<dbReference type="InterPro" id="IPR012677">
    <property type="entry name" value="Nucleotide-bd_a/b_plait_sf"/>
</dbReference>
<dbReference type="InterPro" id="IPR035979">
    <property type="entry name" value="RBD_domain_sf"/>
</dbReference>
<dbReference type="InterPro" id="IPR034897">
    <property type="entry name" value="RBM4_RRM1"/>
</dbReference>
<dbReference type="InterPro" id="IPR034898">
    <property type="entry name" value="RBM4_RRM2"/>
</dbReference>
<dbReference type="InterPro" id="IPR000504">
    <property type="entry name" value="RRM_dom"/>
</dbReference>
<dbReference type="InterPro" id="IPR001878">
    <property type="entry name" value="Znf_CCHC"/>
</dbReference>
<dbReference type="PANTHER" id="PTHR48025:SF26">
    <property type="entry name" value="HETEROGENEOUS NUCLEAR RIBONUCLEOPROTEIN M-RELATED"/>
    <property type="match status" value="1"/>
</dbReference>
<dbReference type="PANTHER" id="PTHR48025">
    <property type="entry name" value="OS02G0815200 PROTEIN"/>
    <property type="match status" value="1"/>
</dbReference>
<dbReference type="Pfam" id="PF00076">
    <property type="entry name" value="RRM_1"/>
    <property type="match status" value="2"/>
</dbReference>
<dbReference type="Pfam" id="PF00098">
    <property type="entry name" value="zf-CCHC"/>
    <property type="match status" value="1"/>
</dbReference>
<dbReference type="SMART" id="SM00360">
    <property type="entry name" value="RRM"/>
    <property type="match status" value="2"/>
</dbReference>
<dbReference type="SMART" id="SM00343">
    <property type="entry name" value="ZnF_C2HC"/>
    <property type="match status" value="1"/>
</dbReference>
<dbReference type="SUPFAM" id="SSF54928">
    <property type="entry name" value="RNA-binding domain, RBD"/>
    <property type="match status" value="2"/>
</dbReference>
<dbReference type="PROSITE" id="PS50102">
    <property type="entry name" value="RRM"/>
    <property type="match status" value="2"/>
</dbReference>
<dbReference type="PROSITE" id="PS50158">
    <property type="entry name" value="ZF_CCHC"/>
    <property type="match status" value="1"/>
</dbReference>
<organism>
    <name type="scientific">Homo sapiens</name>
    <name type="common">Human</name>
    <dbReference type="NCBI Taxonomy" id="9606"/>
    <lineage>
        <taxon>Eukaryota</taxon>
        <taxon>Metazoa</taxon>
        <taxon>Chordata</taxon>
        <taxon>Craniata</taxon>
        <taxon>Vertebrata</taxon>
        <taxon>Euteleostomi</taxon>
        <taxon>Mammalia</taxon>
        <taxon>Eutheria</taxon>
        <taxon>Euarchontoglires</taxon>
        <taxon>Primates</taxon>
        <taxon>Haplorrhini</taxon>
        <taxon>Catarrhini</taxon>
        <taxon>Hominidae</taxon>
        <taxon>Homo</taxon>
    </lineage>
</organism>
<name>RBM4B_HUMAN</name>
<feature type="chain" id="PRO_0000081787" description="RNA-binding protein 4B">
    <location>
        <begin position="1"/>
        <end position="359"/>
    </location>
</feature>
<feature type="domain" description="RRM 1" evidence="3">
    <location>
        <begin position="2"/>
        <end position="72"/>
    </location>
</feature>
<feature type="domain" description="RRM 2" evidence="3">
    <location>
        <begin position="78"/>
        <end position="148"/>
    </location>
</feature>
<feature type="zinc finger region" description="CCHC-type" evidence="2">
    <location>
        <begin position="160"/>
        <end position="177"/>
    </location>
</feature>
<feature type="region of interest" description="Interaction with TNPO3" evidence="1">
    <location>
        <begin position="196"/>
        <end position="359"/>
    </location>
</feature>
<feature type="sequence variant" id="VAR_064766" evidence="6">
    <original>E</original>
    <variation>V</variation>
    <location>
        <position position="93"/>
    </location>
</feature>
<feature type="strand" evidence="7">
    <location>
        <begin position="76"/>
        <end position="84"/>
    </location>
</feature>
<feature type="helix" evidence="7">
    <location>
        <begin position="91"/>
        <end position="99"/>
    </location>
</feature>
<feature type="strand" evidence="7">
    <location>
        <begin position="106"/>
        <end position="109"/>
    </location>
</feature>
<feature type="strand" evidence="7">
    <location>
        <begin position="111"/>
        <end position="119"/>
    </location>
</feature>
<feature type="helix" evidence="7">
    <location>
        <begin position="121"/>
        <end position="131"/>
    </location>
</feature>
<feature type="strand" evidence="7">
    <location>
        <begin position="134"/>
        <end position="136"/>
    </location>
</feature>
<feature type="strand" evidence="7">
    <location>
        <begin position="139"/>
        <end position="147"/>
    </location>
</feature>
<sequence length="359" mass="40150">MVKLFIGNLPREATEQEIRSLFEQYGKVLECDIIKNYGFVHIEDKTAAEDAIRNLHHYKLHGVNINVEASKNKSKASTKLHVGNISPTCTNQELRAKFEEYGPVIECDIVKDYAFVHMERAEDAVEAIRGLDNTEFQGKRMHVQLSTSRLRTAPGMGDQSGCYRCGKEGHWSKECPVDRTGRVADFTEQYNEQYGAVRTPYTMGYGESMYYNDAYGALDYYKRYRVRSYEAVAAAAAASAYNYAEQTMSHLPQVQSTTVTSHLNSTSVDPYDRHLLPNSGAAATSAAMAAAAATTSSYYGRDRSPLRRAAAMLPTVGEGYGYGPESELSQASAATRNSLYDMARYEREQYVDRARYSAF</sequence>
<reference key="1">
    <citation type="journal article" date="2004" name="Nat. Genet.">
        <title>Complete sequencing and characterization of 21,243 full-length human cDNAs.</title>
        <authorList>
            <person name="Ota T."/>
            <person name="Suzuki Y."/>
            <person name="Nishikawa T."/>
            <person name="Otsuki T."/>
            <person name="Sugiyama T."/>
            <person name="Irie R."/>
            <person name="Wakamatsu A."/>
            <person name="Hayashi K."/>
            <person name="Sato H."/>
            <person name="Nagai K."/>
            <person name="Kimura K."/>
            <person name="Makita H."/>
            <person name="Sekine M."/>
            <person name="Obayashi M."/>
            <person name="Nishi T."/>
            <person name="Shibahara T."/>
            <person name="Tanaka T."/>
            <person name="Ishii S."/>
            <person name="Yamamoto J."/>
            <person name="Saito K."/>
            <person name="Kawai Y."/>
            <person name="Isono Y."/>
            <person name="Nakamura Y."/>
            <person name="Nagahari K."/>
            <person name="Murakami K."/>
            <person name="Yasuda T."/>
            <person name="Iwayanagi T."/>
            <person name="Wagatsuma M."/>
            <person name="Shiratori A."/>
            <person name="Sudo H."/>
            <person name="Hosoiri T."/>
            <person name="Kaku Y."/>
            <person name="Kodaira H."/>
            <person name="Kondo H."/>
            <person name="Sugawara M."/>
            <person name="Takahashi M."/>
            <person name="Kanda K."/>
            <person name="Yokoi T."/>
            <person name="Furuya T."/>
            <person name="Kikkawa E."/>
            <person name="Omura Y."/>
            <person name="Abe K."/>
            <person name="Kamihara K."/>
            <person name="Katsuta N."/>
            <person name="Sato K."/>
            <person name="Tanikawa M."/>
            <person name="Yamazaki M."/>
            <person name="Ninomiya K."/>
            <person name="Ishibashi T."/>
            <person name="Yamashita H."/>
            <person name="Murakawa K."/>
            <person name="Fujimori K."/>
            <person name="Tanai H."/>
            <person name="Kimata M."/>
            <person name="Watanabe M."/>
            <person name="Hiraoka S."/>
            <person name="Chiba Y."/>
            <person name="Ishida S."/>
            <person name="Ono Y."/>
            <person name="Takiguchi S."/>
            <person name="Watanabe S."/>
            <person name="Yosida M."/>
            <person name="Hotuta T."/>
            <person name="Kusano J."/>
            <person name="Kanehori K."/>
            <person name="Takahashi-Fujii A."/>
            <person name="Hara H."/>
            <person name="Tanase T.-O."/>
            <person name="Nomura Y."/>
            <person name="Togiya S."/>
            <person name="Komai F."/>
            <person name="Hara R."/>
            <person name="Takeuchi K."/>
            <person name="Arita M."/>
            <person name="Imose N."/>
            <person name="Musashino K."/>
            <person name="Yuuki H."/>
            <person name="Oshima A."/>
            <person name="Sasaki N."/>
            <person name="Aotsuka S."/>
            <person name="Yoshikawa Y."/>
            <person name="Matsunawa H."/>
            <person name="Ichihara T."/>
            <person name="Shiohata N."/>
            <person name="Sano S."/>
            <person name="Moriya S."/>
            <person name="Momiyama H."/>
            <person name="Satoh N."/>
            <person name="Takami S."/>
            <person name="Terashima Y."/>
            <person name="Suzuki O."/>
            <person name="Nakagawa S."/>
            <person name="Senoh A."/>
            <person name="Mizoguchi H."/>
            <person name="Goto Y."/>
            <person name="Shimizu F."/>
            <person name="Wakebe H."/>
            <person name="Hishigaki H."/>
            <person name="Watanabe T."/>
            <person name="Sugiyama A."/>
            <person name="Takemoto M."/>
            <person name="Kawakami B."/>
            <person name="Yamazaki M."/>
            <person name="Watanabe K."/>
            <person name="Kumagai A."/>
            <person name="Itakura S."/>
            <person name="Fukuzumi Y."/>
            <person name="Fujimori Y."/>
            <person name="Komiyama M."/>
            <person name="Tashiro H."/>
            <person name="Tanigami A."/>
            <person name="Fujiwara T."/>
            <person name="Ono T."/>
            <person name="Yamada K."/>
            <person name="Fujii Y."/>
            <person name="Ozaki K."/>
            <person name="Hirao M."/>
            <person name="Ohmori Y."/>
            <person name="Kawabata A."/>
            <person name="Hikiji T."/>
            <person name="Kobatake N."/>
            <person name="Inagaki H."/>
            <person name="Ikema Y."/>
            <person name="Okamoto S."/>
            <person name="Okitani R."/>
            <person name="Kawakami T."/>
            <person name="Noguchi S."/>
            <person name="Itoh T."/>
            <person name="Shigeta K."/>
            <person name="Senba T."/>
            <person name="Matsumura K."/>
            <person name="Nakajima Y."/>
            <person name="Mizuno T."/>
            <person name="Morinaga M."/>
            <person name="Sasaki M."/>
            <person name="Togashi T."/>
            <person name="Oyama M."/>
            <person name="Hata H."/>
            <person name="Watanabe M."/>
            <person name="Komatsu T."/>
            <person name="Mizushima-Sugano J."/>
            <person name="Satoh T."/>
            <person name="Shirai Y."/>
            <person name="Takahashi Y."/>
            <person name="Nakagawa K."/>
            <person name="Okumura K."/>
            <person name="Nagase T."/>
            <person name="Nomura N."/>
            <person name="Kikuchi H."/>
            <person name="Masuho Y."/>
            <person name="Yamashita R."/>
            <person name="Nakai K."/>
            <person name="Yada T."/>
            <person name="Nakamura Y."/>
            <person name="Ohara O."/>
            <person name="Isogai T."/>
            <person name="Sugano S."/>
        </authorList>
    </citation>
    <scope>NUCLEOTIDE SEQUENCE [LARGE SCALE MRNA]</scope>
    <source>
        <tissue>Substantia nigra</tissue>
    </source>
</reference>
<reference key="2">
    <citation type="submission" date="2005-07" db="EMBL/GenBank/DDBJ databases">
        <authorList>
            <person name="Mural R.J."/>
            <person name="Istrail S."/>
            <person name="Sutton G.G."/>
            <person name="Florea L."/>
            <person name="Halpern A.L."/>
            <person name="Mobarry C.M."/>
            <person name="Lippert R."/>
            <person name="Walenz B."/>
            <person name="Shatkay H."/>
            <person name="Dew I."/>
            <person name="Miller J.R."/>
            <person name="Flanigan M.J."/>
            <person name="Edwards N.J."/>
            <person name="Bolanos R."/>
            <person name="Fasulo D."/>
            <person name="Halldorsson B.V."/>
            <person name="Hannenhalli S."/>
            <person name="Turner R."/>
            <person name="Yooseph S."/>
            <person name="Lu F."/>
            <person name="Nusskern D.R."/>
            <person name="Shue B.C."/>
            <person name="Zheng X.H."/>
            <person name="Zhong F."/>
            <person name="Delcher A.L."/>
            <person name="Huson D.H."/>
            <person name="Kravitz S.A."/>
            <person name="Mouchard L."/>
            <person name="Reinert K."/>
            <person name="Remington K.A."/>
            <person name="Clark A.G."/>
            <person name="Waterman M.S."/>
            <person name="Eichler E.E."/>
            <person name="Adams M.D."/>
            <person name="Hunkapiller M.W."/>
            <person name="Myers E.W."/>
            <person name="Venter J.C."/>
        </authorList>
    </citation>
    <scope>NUCLEOTIDE SEQUENCE [LARGE SCALE GENOMIC DNA]</scope>
</reference>
<reference key="3">
    <citation type="journal article" date="2004" name="Genome Res.">
        <title>The status, quality, and expansion of the NIH full-length cDNA project: the Mammalian Gene Collection (MGC).</title>
        <authorList>
            <consortium name="The MGC Project Team"/>
        </authorList>
    </citation>
    <scope>NUCLEOTIDE SEQUENCE [LARGE SCALE MRNA]</scope>
    <source>
        <tissue>Lymph</tissue>
    </source>
</reference>
<reference key="4">
    <citation type="submission" date="2008-12" db="UniProtKB">
        <authorList>
            <person name="Lubec G."/>
            <person name="Chen W.-Q."/>
            <person name="Sun Y."/>
        </authorList>
    </citation>
    <scope>PROTEIN SEQUENCE OF 4-11; 80-95; 98-111; 130-139; 183-198 AND 309-336</scope>
    <scope>IDENTIFICATION BY MASS SPECTROMETRY</scope>
    <source>
        <tissue>Fetal brain cortex</tissue>
    </source>
</reference>
<reference key="5">
    <citation type="journal article" date="2002" name="Mol. Biol. Cell">
        <title>Functional proteomic analysis of human nucleolus.</title>
        <authorList>
            <person name="Scherl A."/>
            <person name="Coute Y."/>
            <person name="Deon C."/>
            <person name="Calle A."/>
            <person name="Kindbeiter K."/>
            <person name="Sanchez J.-C."/>
            <person name="Greco A."/>
            <person name="Hochstrasser D.F."/>
            <person name="Diaz J.-J."/>
        </authorList>
    </citation>
    <scope>SUBCELLULAR LOCATION [LARGE SCALE ANALYSIS]</scope>
    <source>
        <tissue>Cervix carcinoma</tissue>
    </source>
</reference>
<reference key="6">
    <citation type="journal article" date="2003" name="EMBO J.">
        <title>A novel splicing regulator shares a nuclear import pathway with SR proteins.</title>
        <authorList>
            <person name="Lai M.-C."/>
            <person name="Kuo H.-W."/>
            <person name="Chang W.-C."/>
            <person name="Tarn W.-Y."/>
        </authorList>
    </citation>
    <scope>INTERACTION WITH TNPO3</scope>
    <scope>TISSUE SPECIFICITY</scope>
</reference>
<reference key="7">
    <citation type="journal article" date="2008" name="Neurosci. Lett.">
        <title>The LARK/RBM4a protein is highly expressed in cerebellum as compared to cerebrum.</title>
        <authorList>
            <person name="Pfuhl T."/>
            <person name="Mamiani A."/>
            <person name="Durr M."/>
            <person name="Welter S."/>
            <person name="Stieber J."/>
            <person name="Ankara J."/>
            <person name="Liss M."/>
            <person name="Dobner T."/>
            <person name="Schmitt A."/>
            <person name="Falkai P."/>
            <person name="Kremmer E."/>
            <person name="Jung V."/>
            <person name="Barth S."/>
            <person name="Grasser F.A."/>
        </authorList>
    </citation>
    <scope>SUBCELLULAR LOCATION</scope>
    <scope>TISSUE SPECIFICITY</scope>
</reference>
<reference key="8">
    <citation type="journal article" date="2010" name="Sci. Signal.">
        <title>Quantitative phosphoproteomics reveals widespread full phosphorylation site occupancy during mitosis.</title>
        <authorList>
            <person name="Olsen J.V."/>
            <person name="Vermeulen M."/>
            <person name="Santamaria A."/>
            <person name="Kumar C."/>
            <person name="Miller M.L."/>
            <person name="Jensen L.J."/>
            <person name="Gnad F."/>
            <person name="Cox J."/>
            <person name="Jensen T.S."/>
            <person name="Nigg E.A."/>
            <person name="Brunak S."/>
            <person name="Mann M."/>
        </authorList>
    </citation>
    <scope>IDENTIFICATION BY MASS SPECTROMETRY [LARGE SCALE ANALYSIS]</scope>
    <source>
        <tissue>Cervix carcinoma</tissue>
    </source>
</reference>
<reference key="9">
    <citation type="submission" date="2006-09" db="PDB data bank">
        <title>Solution structure of the second RNA binding domain in RNA-binding protein 30.</title>
        <authorList>
            <consortium name="RIKEN structural genomics initiative (RSGI)"/>
        </authorList>
    </citation>
    <scope>STRUCTURE BY NMR OF 69-155</scope>
</reference>
<reference key="10">
    <citation type="journal article" date="2011" name="Nature">
        <title>Exome sequencing identifies frequent mutation of the SWI/SNF complex gene PBRM1 in renal carcinoma.</title>
        <authorList>
            <person name="Varela I."/>
            <person name="Tarpey P."/>
            <person name="Raine K."/>
            <person name="Huang D."/>
            <person name="Ong C.K."/>
            <person name="Stephens P."/>
            <person name="Davies H."/>
            <person name="Jones D."/>
            <person name="Lin M.L."/>
            <person name="Teague J."/>
            <person name="Bignell G."/>
            <person name="Butler A."/>
            <person name="Cho J."/>
            <person name="Dalgliesh G.L."/>
            <person name="Galappaththige D."/>
            <person name="Greenman C."/>
            <person name="Hardy C."/>
            <person name="Jia M."/>
            <person name="Latimer C."/>
            <person name="Lau K.W."/>
            <person name="Marshall J."/>
            <person name="McLaren S."/>
            <person name="Menzies A."/>
            <person name="Mudie L."/>
            <person name="Stebbings L."/>
            <person name="Largaespada D.A."/>
            <person name="Wessels L.F.A."/>
            <person name="Richard S."/>
            <person name="Kahnoski R.J."/>
            <person name="Anema J."/>
            <person name="Tuveson D.A."/>
            <person name="Perez-Mancera P.A."/>
            <person name="Mustonen V."/>
            <person name="Fischer A."/>
            <person name="Adams D.J."/>
            <person name="Rust A."/>
            <person name="Chan-On W."/>
            <person name="Subimerb C."/>
            <person name="Dykema K."/>
            <person name="Furge K."/>
            <person name="Campbell P.J."/>
            <person name="Teh B.T."/>
            <person name="Stratton M.R."/>
            <person name="Futreal P.A."/>
        </authorList>
    </citation>
    <scope>VARIANT VAL-93</scope>
</reference>
<accession>Q9BQ04</accession>
<accession>B3KT83</accession>
<gene>
    <name type="primary">RBM4B</name>
    <name type="synonym">RBM30</name>
</gene>
<keyword id="KW-0002">3D-structure</keyword>
<keyword id="KW-0010">Activator</keyword>
<keyword id="KW-0903">Direct protein sequencing</keyword>
<keyword id="KW-0479">Metal-binding</keyword>
<keyword id="KW-0507">mRNA processing</keyword>
<keyword id="KW-0508">mRNA splicing</keyword>
<keyword id="KW-0539">Nucleus</keyword>
<keyword id="KW-1267">Proteomics identification</keyword>
<keyword id="KW-1185">Reference proteome</keyword>
<keyword id="KW-0677">Repeat</keyword>
<keyword id="KW-0694">RNA-binding</keyword>
<keyword id="KW-0862">Zinc</keyword>
<keyword id="KW-0863">Zinc-finger</keyword>
<evidence type="ECO:0000250" key="1"/>
<evidence type="ECO:0000255" key="2">
    <source>
        <dbReference type="PROSITE-ProRule" id="PRU00047"/>
    </source>
</evidence>
<evidence type="ECO:0000255" key="3">
    <source>
        <dbReference type="PROSITE-ProRule" id="PRU00176"/>
    </source>
</evidence>
<evidence type="ECO:0000269" key="4">
    <source>
    </source>
</evidence>
<evidence type="ECO:0000269" key="5">
    <source>
    </source>
</evidence>
<evidence type="ECO:0000269" key="6">
    <source>
    </source>
</evidence>
<evidence type="ECO:0007829" key="7">
    <source>
        <dbReference type="PDB" id="2DGT"/>
    </source>
</evidence>
<comment type="function">
    <text evidence="1">Required for the translational activation of PER1 mRNA in response to circadian clock. Binds directly to the 3'-UTR of the PER1 mRNA (By similarity).</text>
</comment>
<comment type="subunit">
    <text evidence="4">Interacts with TNPO3, which may mediate nuclear import of the protein.</text>
</comment>
<comment type="interaction">
    <interactant intactId="EBI-715531">
        <id>Q9BQ04</id>
    </interactant>
    <interactant intactId="EBI-11954292">
        <id>Q86V38</id>
        <label>ATN1</label>
    </interactant>
    <organismsDiffer>false</organismsDiffer>
    <experiments>3</experiments>
</comment>
<comment type="interaction">
    <interactant intactId="EBI-715531">
        <id>Q9BQ04</id>
    </interactant>
    <interactant intactId="EBI-948630">
        <id>Q86Y13</id>
        <label>DZIP3</label>
    </interactant>
    <organismsDiffer>false</organismsDiffer>
    <experiments>4</experiments>
</comment>
<comment type="interaction">
    <interactant intactId="EBI-715531">
        <id>Q9BQ04</id>
    </interactant>
    <interactant intactId="EBI-1018153">
        <id>Q9BUJ2</id>
        <label>HNRNPUL1</label>
    </interactant>
    <organismsDiffer>false</organismsDiffer>
    <experiments>3</experiments>
</comment>
<comment type="interaction">
    <interactant intactId="EBI-715531">
        <id>Q9BQ04</id>
    </interactant>
    <interactant intactId="EBI-8284732">
        <id>Q13351</id>
        <label>KLF1</label>
    </interactant>
    <organismsDiffer>false</organismsDiffer>
    <experiments>3</experiments>
</comment>
<comment type="interaction">
    <interactant intactId="EBI-715531">
        <id>Q9BQ04</id>
    </interactant>
    <interactant intactId="EBI-10271199">
        <id>Q8NI38</id>
        <label>NFKBID</label>
    </interactant>
    <organismsDiffer>false</organismsDiffer>
    <experiments>3</experiments>
</comment>
<comment type="interaction">
    <interactant intactId="EBI-715531">
        <id>Q9BQ04</id>
    </interactant>
    <interactant intactId="EBI-8463848">
        <id>Q8NB12</id>
        <label>SMYD1</label>
    </interactant>
    <organismsDiffer>false</organismsDiffer>
    <experiments>2</experiments>
</comment>
<comment type="interaction">
    <interactant intactId="EBI-715531">
        <id>Q9BQ04</id>
    </interactant>
    <interactant intactId="EBI-607085">
        <id>P09012</id>
        <label>SNRPA</label>
    </interactant>
    <organismsDiffer>false</organismsDiffer>
    <experiments>3</experiments>
</comment>
<comment type="interaction">
    <interactant intactId="EBI-715531">
        <id>Q9BQ04</id>
    </interactant>
    <interactant intactId="EBI-10241197">
        <id>Q3SY00</id>
        <label>TSGA10IP</label>
    </interactant>
    <organismsDiffer>false</organismsDiffer>
    <experiments>3</experiments>
</comment>
<comment type="subcellular location">
    <subcellularLocation>
        <location>Nucleus</location>
    </subcellularLocation>
    <subcellularLocation>
        <location>Nucleus</location>
        <location>Nucleolus</location>
    </subcellularLocation>
</comment>
<comment type="tissue specificity">
    <text evidence="4 5">Expressed in liver and kidney (at protein level). Ubiquitously expressed.</text>
</comment>